<keyword id="KW-0244">Early protein</keyword>
<keyword id="KW-0479">Metal-binding</keyword>
<keyword id="KW-0862">Zinc</keyword>
<organism>
    <name type="scientific">African swine fever virus (isolate Tick/Malawi/Lil 20-1/1983)</name>
    <name type="common">ASFV</name>
    <dbReference type="NCBI Taxonomy" id="10500"/>
    <lineage>
        <taxon>Viruses</taxon>
        <taxon>Varidnaviria</taxon>
        <taxon>Bamfordvirae</taxon>
        <taxon>Nucleocytoviricota</taxon>
        <taxon>Pokkesviricetes</taxon>
        <taxon>Asfuvirales</taxon>
        <taxon>Asfarviridae</taxon>
        <taxon>Asfivirus</taxon>
        <taxon>African swine fever virus</taxon>
    </lineage>
</organism>
<name>VF151_ASFM2</name>
<dbReference type="EMBL" id="AY261361">
    <property type="status" value="NOT_ANNOTATED_CDS"/>
    <property type="molecule type" value="Genomic_DNA"/>
</dbReference>
<dbReference type="SMR" id="P0CA56"/>
<dbReference type="Proteomes" id="UP000000860">
    <property type="component" value="Segment"/>
</dbReference>
<dbReference type="GO" id="GO:0046872">
    <property type="term" value="F:metal ion binding"/>
    <property type="evidence" value="ECO:0007669"/>
    <property type="project" value="UniProtKB-KW"/>
</dbReference>
<feature type="chain" id="PRO_0000373531" description="Protein A151R">
    <location>
        <begin position="1"/>
        <end position="150"/>
    </location>
</feature>
<gene>
    <name type="ordered locus">Mal-045</name>
</gene>
<accession>P0CA56</accession>
<reference key="1">
    <citation type="submission" date="2003-03" db="EMBL/GenBank/DDBJ databases">
        <title>African swine fever virus genomes.</title>
        <authorList>
            <person name="Kutish G.F."/>
            <person name="Rock D.L."/>
        </authorList>
    </citation>
    <scope>NUCLEOTIDE SEQUENCE [LARGE SCALE GENOMIC DNA]</scope>
</reference>
<sequence>MALSYKEKLIECIDNELQNGGTLLLLTNNNVVSEISYYGNGYKYFTFNTNHDLISQEELKGATSNNIARMIYNWIMKNPQNNKIWNGEPQTRIYFENNVYHTNYNHECIKDFWEVSTKVGPCIFNDRSIWCTKCTTFYPFSNILSPNMLE</sequence>
<organismHost>
    <name type="scientific">Ornithodoros</name>
    <name type="common">relapsing fever ticks</name>
    <dbReference type="NCBI Taxonomy" id="6937"/>
</organismHost>
<organismHost>
    <name type="scientific">Phacochoerus aethiopicus</name>
    <name type="common">Warthog</name>
    <dbReference type="NCBI Taxonomy" id="85517"/>
</organismHost>
<organismHost>
    <name type="scientific">Phacochoerus africanus</name>
    <name type="common">Warthog</name>
    <dbReference type="NCBI Taxonomy" id="41426"/>
</organismHost>
<organismHost>
    <name type="scientific">Potamochoerus larvatus</name>
    <name type="common">Bushpig</name>
    <dbReference type="NCBI Taxonomy" id="273792"/>
</organismHost>
<organismHost>
    <name type="scientific">Sus scrofa</name>
    <name type="common">Pig</name>
    <dbReference type="NCBI Taxonomy" id="9823"/>
</organismHost>
<proteinExistence type="inferred from homology"/>
<protein>
    <recommendedName>
        <fullName>Protein A151R</fullName>
        <shortName>pA151R</shortName>
    </recommendedName>
</protein>
<comment type="function">
    <text evidence="1">May participate in a redox cascade for the formation of disulfide bonds in viral proteins.</text>
</comment>
<comment type="cofactor">
    <cofactor evidence="1">
        <name>Zn(2+)</name>
        <dbReference type="ChEBI" id="CHEBI:29105"/>
    </cofactor>
    <text evidence="1">Binds 1 Zn(2+) ion.</text>
</comment>
<comment type="subunit">
    <text evidence="1">Monomer (By similarity). Homodimer (By similarity). Interacts with protein B119L (By similarity). Interacts with membrane protein E248R (By similarity).</text>
</comment>
<comment type="induction">
    <text evidence="2">Expressed in the early phase of the viral replicative cycle.</text>
</comment>
<comment type="similarity">
    <text evidence="2">Belongs to the asfivirus A151R family.</text>
</comment>
<evidence type="ECO:0000250" key="1">
    <source>
        <dbReference type="UniProtKB" id="Q65140"/>
    </source>
</evidence>
<evidence type="ECO:0000305" key="2"/>